<dbReference type="EMBL" id="AE017126">
    <property type="protein sequence ID" value="AAQ00748.1"/>
    <property type="molecule type" value="Genomic_DNA"/>
</dbReference>
<dbReference type="RefSeq" id="NP_876095.1">
    <property type="nucleotide sequence ID" value="NC_005042.1"/>
</dbReference>
<dbReference type="RefSeq" id="WP_011125853.1">
    <property type="nucleotide sequence ID" value="NC_005042.1"/>
</dbReference>
<dbReference type="SMR" id="Q7V9X0"/>
<dbReference type="STRING" id="167539.Pro_1704"/>
<dbReference type="EnsemblBacteria" id="AAQ00748">
    <property type="protein sequence ID" value="AAQ00748"/>
    <property type="gene ID" value="Pro_1704"/>
</dbReference>
<dbReference type="KEGG" id="pma:Pro_1704"/>
<dbReference type="PATRIC" id="fig|167539.5.peg.1799"/>
<dbReference type="eggNOG" id="COG0255">
    <property type="taxonomic scope" value="Bacteria"/>
</dbReference>
<dbReference type="HOGENOM" id="CLU_158491_0_1_3"/>
<dbReference type="OrthoDB" id="9815192at2"/>
<dbReference type="Proteomes" id="UP000001420">
    <property type="component" value="Chromosome"/>
</dbReference>
<dbReference type="GO" id="GO:1990904">
    <property type="term" value="C:ribonucleoprotein complex"/>
    <property type="evidence" value="ECO:0007669"/>
    <property type="project" value="UniProtKB-KW"/>
</dbReference>
<dbReference type="GO" id="GO:0005840">
    <property type="term" value="C:ribosome"/>
    <property type="evidence" value="ECO:0007669"/>
    <property type="project" value="UniProtKB-KW"/>
</dbReference>
<dbReference type="GO" id="GO:0003735">
    <property type="term" value="F:structural constituent of ribosome"/>
    <property type="evidence" value="ECO:0007669"/>
    <property type="project" value="InterPro"/>
</dbReference>
<dbReference type="GO" id="GO:0006412">
    <property type="term" value="P:translation"/>
    <property type="evidence" value="ECO:0007669"/>
    <property type="project" value="UniProtKB-UniRule"/>
</dbReference>
<dbReference type="CDD" id="cd00427">
    <property type="entry name" value="Ribosomal_L29_HIP"/>
    <property type="match status" value="1"/>
</dbReference>
<dbReference type="Gene3D" id="1.10.287.310">
    <property type="match status" value="1"/>
</dbReference>
<dbReference type="HAMAP" id="MF_00374">
    <property type="entry name" value="Ribosomal_uL29"/>
    <property type="match status" value="1"/>
</dbReference>
<dbReference type="InterPro" id="IPR001854">
    <property type="entry name" value="Ribosomal_uL29"/>
</dbReference>
<dbReference type="InterPro" id="IPR036049">
    <property type="entry name" value="Ribosomal_uL29_sf"/>
</dbReference>
<dbReference type="NCBIfam" id="TIGR00012">
    <property type="entry name" value="L29"/>
    <property type="match status" value="1"/>
</dbReference>
<dbReference type="Pfam" id="PF00831">
    <property type="entry name" value="Ribosomal_L29"/>
    <property type="match status" value="1"/>
</dbReference>
<dbReference type="SUPFAM" id="SSF46561">
    <property type="entry name" value="Ribosomal protein L29 (L29p)"/>
    <property type="match status" value="1"/>
</dbReference>
<gene>
    <name evidence="1" type="primary">rpmC</name>
    <name evidence="1" type="synonym">rpl29</name>
    <name type="ordered locus">Pro_1704</name>
</gene>
<sequence>MAESEKLDVSKLTDIEIKEKIDVTRRELFDLRFQRATRQLNETHRFKKARVQLAQLLTAQGERSRSNT</sequence>
<keyword id="KW-1185">Reference proteome</keyword>
<keyword id="KW-0687">Ribonucleoprotein</keyword>
<keyword id="KW-0689">Ribosomal protein</keyword>
<comment type="similarity">
    <text evidence="1">Belongs to the universal ribosomal protein uL29 family.</text>
</comment>
<feature type="chain" id="PRO_0000130434" description="Large ribosomal subunit protein uL29">
    <location>
        <begin position="1"/>
        <end position="68"/>
    </location>
</feature>
<organism>
    <name type="scientific">Prochlorococcus marinus (strain SARG / CCMP1375 / SS120)</name>
    <dbReference type="NCBI Taxonomy" id="167539"/>
    <lineage>
        <taxon>Bacteria</taxon>
        <taxon>Bacillati</taxon>
        <taxon>Cyanobacteriota</taxon>
        <taxon>Cyanophyceae</taxon>
        <taxon>Synechococcales</taxon>
        <taxon>Prochlorococcaceae</taxon>
        <taxon>Prochlorococcus</taxon>
    </lineage>
</organism>
<proteinExistence type="inferred from homology"/>
<protein>
    <recommendedName>
        <fullName evidence="1">Large ribosomal subunit protein uL29</fullName>
    </recommendedName>
    <alternativeName>
        <fullName evidence="2">50S ribosomal protein L29</fullName>
    </alternativeName>
</protein>
<reference key="1">
    <citation type="journal article" date="2003" name="Proc. Natl. Acad. Sci. U.S.A.">
        <title>Genome sequence of the cyanobacterium Prochlorococcus marinus SS120, a nearly minimal oxyphototrophic genome.</title>
        <authorList>
            <person name="Dufresne A."/>
            <person name="Salanoubat M."/>
            <person name="Partensky F."/>
            <person name="Artiguenave F."/>
            <person name="Axmann I.M."/>
            <person name="Barbe V."/>
            <person name="Duprat S."/>
            <person name="Galperin M.Y."/>
            <person name="Koonin E.V."/>
            <person name="Le Gall F."/>
            <person name="Makarova K.S."/>
            <person name="Ostrowski M."/>
            <person name="Oztas S."/>
            <person name="Robert C."/>
            <person name="Rogozin I.B."/>
            <person name="Scanlan D.J."/>
            <person name="Tandeau de Marsac N."/>
            <person name="Weissenbach J."/>
            <person name="Wincker P."/>
            <person name="Wolf Y.I."/>
            <person name="Hess W.R."/>
        </authorList>
    </citation>
    <scope>NUCLEOTIDE SEQUENCE [LARGE SCALE GENOMIC DNA]</scope>
    <source>
        <strain>SARG / CCMP1375 / SS120</strain>
    </source>
</reference>
<accession>Q7V9X0</accession>
<evidence type="ECO:0000255" key="1">
    <source>
        <dbReference type="HAMAP-Rule" id="MF_00374"/>
    </source>
</evidence>
<evidence type="ECO:0000305" key="2"/>
<name>RL29_PROMA</name>